<organism>
    <name type="scientific">Coxiella burnetii (strain RSA 493 / Nine Mile phase I)</name>
    <dbReference type="NCBI Taxonomy" id="227377"/>
    <lineage>
        <taxon>Bacteria</taxon>
        <taxon>Pseudomonadati</taxon>
        <taxon>Pseudomonadota</taxon>
        <taxon>Gammaproteobacteria</taxon>
        <taxon>Legionellales</taxon>
        <taxon>Coxiellaceae</taxon>
        <taxon>Coxiella</taxon>
    </lineage>
</organism>
<evidence type="ECO:0000255" key="1">
    <source>
        <dbReference type="HAMAP-Rule" id="MF_01703"/>
    </source>
</evidence>
<evidence type="ECO:0000305" key="2"/>
<gene>
    <name evidence="1" type="primary">msbA</name>
    <name type="ordered locus">CBU_0856</name>
</gene>
<feature type="chain" id="PRO_0000092575" description="ATP-dependent lipid A-core flippase">
    <location>
        <begin position="1"/>
        <end position="589"/>
    </location>
</feature>
<feature type="transmembrane region" description="Helical" evidence="1">
    <location>
        <begin position="23"/>
        <end position="43"/>
    </location>
</feature>
<feature type="transmembrane region" description="Helical" evidence="1">
    <location>
        <begin position="60"/>
        <end position="80"/>
    </location>
</feature>
<feature type="transmembrane region" description="Helical" evidence="1">
    <location>
        <begin position="153"/>
        <end position="173"/>
    </location>
</feature>
<feature type="transmembrane region" description="Helical" evidence="1">
    <location>
        <begin position="249"/>
        <end position="269"/>
    </location>
</feature>
<feature type="transmembrane region" description="Helical" evidence="1">
    <location>
        <begin position="272"/>
        <end position="292"/>
    </location>
</feature>
<feature type="domain" description="ABC transmembrane type-1" evidence="1">
    <location>
        <begin position="27"/>
        <end position="307"/>
    </location>
</feature>
<feature type="domain" description="ABC transporter" evidence="1">
    <location>
        <begin position="339"/>
        <end position="575"/>
    </location>
</feature>
<feature type="binding site" evidence="1">
    <location>
        <begin position="373"/>
        <end position="380"/>
    </location>
    <ligand>
        <name>ATP</name>
        <dbReference type="ChEBI" id="CHEBI:30616"/>
    </ligand>
</feature>
<dbReference type="EC" id="7.5.2.6" evidence="1"/>
<dbReference type="EMBL" id="AE016828">
    <property type="protein sequence ID" value="AAO90389.2"/>
    <property type="status" value="ALT_INIT"/>
    <property type="molecule type" value="Genomic_DNA"/>
</dbReference>
<dbReference type="RefSeq" id="NP_819875.2">
    <property type="nucleotide sequence ID" value="NC_002971.3"/>
</dbReference>
<dbReference type="RefSeq" id="WP_010957851.1">
    <property type="nucleotide sequence ID" value="NC_002971.4"/>
</dbReference>
<dbReference type="SMR" id="Q83D84"/>
<dbReference type="STRING" id="227377.CBU_0856"/>
<dbReference type="EnsemblBacteria" id="AAO90389">
    <property type="protein sequence ID" value="AAO90389"/>
    <property type="gene ID" value="CBU_0856"/>
</dbReference>
<dbReference type="GeneID" id="1208749"/>
<dbReference type="KEGG" id="cbu:CBU_0856"/>
<dbReference type="PATRIC" id="fig|227377.7.peg.842"/>
<dbReference type="eggNOG" id="COG1132">
    <property type="taxonomic scope" value="Bacteria"/>
</dbReference>
<dbReference type="HOGENOM" id="CLU_000604_84_3_6"/>
<dbReference type="OrthoDB" id="6336411at2"/>
<dbReference type="Proteomes" id="UP000002671">
    <property type="component" value="Chromosome"/>
</dbReference>
<dbReference type="GO" id="GO:0005886">
    <property type="term" value="C:plasma membrane"/>
    <property type="evidence" value="ECO:0007669"/>
    <property type="project" value="UniProtKB-SubCell"/>
</dbReference>
<dbReference type="GO" id="GO:0140359">
    <property type="term" value="F:ABC-type transporter activity"/>
    <property type="evidence" value="ECO:0007669"/>
    <property type="project" value="InterPro"/>
</dbReference>
<dbReference type="GO" id="GO:0005524">
    <property type="term" value="F:ATP binding"/>
    <property type="evidence" value="ECO:0007669"/>
    <property type="project" value="UniProtKB-KW"/>
</dbReference>
<dbReference type="GO" id="GO:0016887">
    <property type="term" value="F:ATP hydrolysis activity"/>
    <property type="evidence" value="ECO:0007669"/>
    <property type="project" value="InterPro"/>
</dbReference>
<dbReference type="GO" id="GO:0034040">
    <property type="term" value="F:ATPase-coupled lipid transmembrane transporter activity"/>
    <property type="evidence" value="ECO:0000318"/>
    <property type="project" value="GO_Central"/>
</dbReference>
<dbReference type="GO" id="GO:0055085">
    <property type="term" value="P:transmembrane transport"/>
    <property type="evidence" value="ECO:0000318"/>
    <property type="project" value="GO_Central"/>
</dbReference>
<dbReference type="CDD" id="cd18552">
    <property type="entry name" value="ABC_6TM_MsbA_like"/>
    <property type="match status" value="1"/>
</dbReference>
<dbReference type="FunFam" id="1.20.1560.10:FF:000243">
    <property type="entry name" value="ABC transporter (MsbA subfamily)"/>
    <property type="match status" value="1"/>
</dbReference>
<dbReference type="FunFam" id="3.40.50.300:FF:000140">
    <property type="entry name" value="Lipid A export ATP-binding/permease protein MsbA"/>
    <property type="match status" value="1"/>
</dbReference>
<dbReference type="Gene3D" id="1.20.1560.10">
    <property type="entry name" value="ABC transporter type 1, transmembrane domain"/>
    <property type="match status" value="1"/>
</dbReference>
<dbReference type="Gene3D" id="3.40.50.300">
    <property type="entry name" value="P-loop containing nucleotide triphosphate hydrolases"/>
    <property type="match status" value="1"/>
</dbReference>
<dbReference type="InterPro" id="IPR003593">
    <property type="entry name" value="AAA+_ATPase"/>
</dbReference>
<dbReference type="InterPro" id="IPR011527">
    <property type="entry name" value="ABC1_TM_dom"/>
</dbReference>
<dbReference type="InterPro" id="IPR036640">
    <property type="entry name" value="ABC1_TM_sf"/>
</dbReference>
<dbReference type="InterPro" id="IPR003439">
    <property type="entry name" value="ABC_transporter-like_ATP-bd"/>
</dbReference>
<dbReference type="InterPro" id="IPR017871">
    <property type="entry name" value="ABC_transporter-like_CS"/>
</dbReference>
<dbReference type="InterPro" id="IPR011917">
    <property type="entry name" value="ABC_transpr_lipidA"/>
</dbReference>
<dbReference type="InterPro" id="IPR027417">
    <property type="entry name" value="P-loop_NTPase"/>
</dbReference>
<dbReference type="InterPro" id="IPR039421">
    <property type="entry name" value="Type_1_exporter"/>
</dbReference>
<dbReference type="NCBIfam" id="TIGR02203">
    <property type="entry name" value="MsbA_lipidA"/>
    <property type="match status" value="1"/>
</dbReference>
<dbReference type="PANTHER" id="PTHR43394:SF1">
    <property type="entry name" value="ATP-BINDING CASSETTE SUB-FAMILY B MEMBER 10, MITOCHONDRIAL"/>
    <property type="match status" value="1"/>
</dbReference>
<dbReference type="PANTHER" id="PTHR43394">
    <property type="entry name" value="ATP-DEPENDENT PERMEASE MDL1, MITOCHONDRIAL"/>
    <property type="match status" value="1"/>
</dbReference>
<dbReference type="Pfam" id="PF00664">
    <property type="entry name" value="ABC_membrane"/>
    <property type="match status" value="1"/>
</dbReference>
<dbReference type="Pfam" id="PF00005">
    <property type="entry name" value="ABC_tran"/>
    <property type="match status" value="1"/>
</dbReference>
<dbReference type="SMART" id="SM00382">
    <property type="entry name" value="AAA"/>
    <property type="match status" value="1"/>
</dbReference>
<dbReference type="SUPFAM" id="SSF90123">
    <property type="entry name" value="ABC transporter transmembrane region"/>
    <property type="match status" value="1"/>
</dbReference>
<dbReference type="SUPFAM" id="SSF52540">
    <property type="entry name" value="P-loop containing nucleoside triphosphate hydrolases"/>
    <property type="match status" value="1"/>
</dbReference>
<dbReference type="PROSITE" id="PS50929">
    <property type="entry name" value="ABC_TM1F"/>
    <property type="match status" value="1"/>
</dbReference>
<dbReference type="PROSITE" id="PS00211">
    <property type="entry name" value="ABC_TRANSPORTER_1"/>
    <property type="match status" value="1"/>
</dbReference>
<dbReference type="PROSITE" id="PS50893">
    <property type="entry name" value="ABC_TRANSPORTER_2"/>
    <property type="match status" value="1"/>
</dbReference>
<dbReference type="PROSITE" id="PS51239">
    <property type="entry name" value="MSBA"/>
    <property type="match status" value="1"/>
</dbReference>
<sequence>MKTLTSQGIRTYGRLLQATKQYWPIFLIGVVGMIAVSLSDAGFTWLIKPIINRGFIARDLVFIRWLPFIIVLVFLFRGAANFLSTYFINRVARNIVMDFRRAIFSHLLRLPAEFYDRHSSGHLLSTVIYNVEQVAQASSDALIITLQASSLVVGLLVVMFLVSWKLTLFFLVITPLIAWVMRVCSARLRHLSTSVQKSVGEVTHIASEAIEAYKIVRLYGGQKYENEKFRHATKLNQQRELKVVVTNSVGTSLVQLLIAIPIAIVLFFATQPSFHVTAGSFASIVSAMIMMLRPVRRLTMVNSYIQKGIAAAESIFKLLDEDVEKDRGERHLVRARGAIEYQGVSFAYDNSKKTILSEISFSIEPGQMVAIVGRSGAGKSTLINLLPRFYDASTGVIKIDDINIKEFRLQELRNQFGLVSQHTTLFNDTILNNIAYGQAGSIDKRKIIEAARAAHAMEFIEQLPEGLDTVIGENGVRLSGGQRQRIAIARALFKNAPIHILDEATSSLDTHSERHIQAALDNLMDQCTTLVIAHRLSTIERADWIMVLEEGRLIEKGTHQQLLTLNGAYAELYRMQFAEKPAAMTALDE</sequence>
<keyword id="KW-0067">ATP-binding</keyword>
<keyword id="KW-0997">Cell inner membrane</keyword>
<keyword id="KW-1003">Cell membrane</keyword>
<keyword id="KW-0445">Lipid transport</keyword>
<keyword id="KW-0472">Membrane</keyword>
<keyword id="KW-0547">Nucleotide-binding</keyword>
<keyword id="KW-1185">Reference proteome</keyword>
<keyword id="KW-1278">Translocase</keyword>
<keyword id="KW-0812">Transmembrane</keyword>
<keyword id="KW-1133">Transmembrane helix</keyword>
<keyword id="KW-0813">Transport</keyword>
<name>MSBA_COXBU</name>
<proteinExistence type="inferred from homology"/>
<comment type="function">
    <text evidence="1">Involved in lipopolysaccharide (LPS) biosynthesis. Translocates lipid A-core from the inner to the outer leaflet of the inner membrane. Transmembrane domains (TMD) form a pore in the inner membrane and the ATP-binding domain (NBD) is responsible for energy generation.</text>
</comment>
<comment type="catalytic activity">
    <reaction evidence="1">
        <text>ATP + H2O + lipid A-core oligosaccharideSide 1 = ADP + phosphate + lipid A-core oligosaccharideSide 2.</text>
        <dbReference type="EC" id="7.5.2.6"/>
    </reaction>
</comment>
<comment type="subunit">
    <text evidence="1">Homodimer.</text>
</comment>
<comment type="subcellular location">
    <subcellularLocation>
        <location evidence="1">Cell inner membrane</location>
        <topology evidence="1">Multi-pass membrane protein</topology>
    </subcellularLocation>
</comment>
<comment type="domain">
    <text evidence="1">In MsbA the ATP-binding domain (NBD) and the transmembrane domain (TMD) are fused.</text>
</comment>
<comment type="similarity">
    <text evidence="1">Belongs to the ABC transporter superfamily. Lipid exporter (TC 3.A.1.106) family.</text>
</comment>
<comment type="sequence caution" evidence="2">
    <conflict type="erroneous initiation">
        <sequence resource="EMBL-CDS" id="AAO90389"/>
    </conflict>
</comment>
<accession>Q83D84</accession>
<protein>
    <recommendedName>
        <fullName evidence="1">ATP-dependent lipid A-core flippase</fullName>
        <ecNumber evidence="1">7.5.2.6</ecNumber>
    </recommendedName>
    <alternativeName>
        <fullName evidence="1">Lipid A export ATP-binding/permease protein MsbA</fullName>
    </alternativeName>
</protein>
<reference key="1">
    <citation type="journal article" date="2003" name="Proc. Natl. Acad. Sci. U.S.A.">
        <title>Complete genome sequence of the Q-fever pathogen, Coxiella burnetii.</title>
        <authorList>
            <person name="Seshadri R."/>
            <person name="Paulsen I.T."/>
            <person name="Eisen J.A."/>
            <person name="Read T.D."/>
            <person name="Nelson K.E."/>
            <person name="Nelson W.C."/>
            <person name="Ward N.L."/>
            <person name="Tettelin H."/>
            <person name="Davidsen T.M."/>
            <person name="Beanan M.J."/>
            <person name="DeBoy R.T."/>
            <person name="Daugherty S.C."/>
            <person name="Brinkac L.M."/>
            <person name="Madupu R."/>
            <person name="Dodson R.J."/>
            <person name="Khouri H.M."/>
            <person name="Lee K.H."/>
            <person name="Carty H.A."/>
            <person name="Scanlan D."/>
            <person name="Heinzen R.A."/>
            <person name="Thompson H.A."/>
            <person name="Samuel J.E."/>
            <person name="Fraser C.M."/>
            <person name="Heidelberg J.F."/>
        </authorList>
    </citation>
    <scope>NUCLEOTIDE SEQUENCE [LARGE SCALE GENOMIC DNA]</scope>
    <source>
        <strain>RSA 493 / Nine Mile phase I</strain>
    </source>
</reference>